<protein>
    <recommendedName>
        <fullName evidence="1">2-succinyl-5-enolpyruvyl-6-hydroxy-3-cyclohexene-1-carboxylate synthase</fullName>
        <shortName evidence="1">SEPHCHC synthase</shortName>
        <ecNumber evidence="1">2.2.1.9</ecNumber>
    </recommendedName>
</protein>
<proteinExistence type="inferred from homology"/>
<keyword id="KW-0460">Magnesium</keyword>
<keyword id="KW-0464">Manganese</keyword>
<keyword id="KW-0479">Metal-binding</keyword>
<keyword id="KW-0786">Thiamine pyrophosphate</keyword>
<keyword id="KW-0808">Transferase</keyword>
<feature type="chain" id="PRO_0000341868" description="2-succinyl-5-enolpyruvyl-6-hydroxy-3-cyclohexene-1-carboxylate synthase">
    <location>
        <begin position="1"/>
        <end position="582"/>
    </location>
</feature>
<reference key="1">
    <citation type="journal article" date="2007" name="Photosyn. Res.">
        <title>Complete nucleotide sequence of the freshwater unicellular cyanobacterium Synechococcus elongatus PCC 6301 chromosome: gene content and organization.</title>
        <authorList>
            <person name="Sugita C."/>
            <person name="Ogata K."/>
            <person name="Shikata M."/>
            <person name="Jikuya H."/>
            <person name="Takano J."/>
            <person name="Furumichi M."/>
            <person name="Kanehisa M."/>
            <person name="Omata T."/>
            <person name="Sugiura M."/>
            <person name="Sugita M."/>
        </authorList>
    </citation>
    <scope>NUCLEOTIDE SEQUENCE [LARGE SCALE GENOMIC DNA]</scope>
    <source>
        <strain>ATCC 27144 / PCC 6301 / SAUG 1402/1</strain>
    </source>
</reference>
<name>MEND_SYNP6</name>
<comment type="function">
    <text evidence="1">Catalyzes the thiamine diphosphate-dependent decarboxylation of 2-oxoglutarate and the subsequent addition of the resulting succinic semialdehyde-thiamine pyrophosphate anion to isochorismate to yield 2-succinyl-5-enolpyruvyl-6-hydroxy-3-cyclohexene-1-carboxylate (SEPHCHC).</text>
</comment>
<comment type="catalytic activity">
    <reaction evidence="1">
        <text>isochorismate + 2-oxoglutarate + H(+) = 5-enolpyruvoyl-6-hydroxy-2-succinyl-cyclohex-3-ene-1-carboxylate + CO2</text>
        <dbReference type="Rhea" id="RHEA:25593"/>
        <dbReference type="ChEBI" id="CHEBI:15378"/>
        <dbReference type="ChEBI" id="CHEBI:16526"/>
        <dbReference type="ChEBI" id="CHEBI:16810"/>
        <dbReference type="ChEBI" id="CHEBI:29780"/>
        <dbReference type="ChEBI" id="CHEBI:58818"/>
        <dbReference type="EC" id="2.2.1.9"/>
    </reaction>
</comment>
<comment type="cofactor">
    <cofactor evidence="1">
        <name>Mg(2+)</name>
        <dbReference type="ChEBI" id="CHEBI:18420"/>
    </cofactor>
    <cofactor evidence="1">
        <name>Mn(2+)</name>
        <dbReference type="ChEBI" id="CHEBI:29035"/>
    </cofactor>
</comment>
<comment type="cofactor">
    <cofactor evidence="1">
        <name>thiamine diphosphate</name>
        <dbReference type="ChEBI" id="CHEBI:58937"/>
    </cofactor>
    <text evidence="1">Binds 1 thiamine pyrophosphate per subunit.</text>
</comment>
<comment type="pathway">
    <text evidence="1">Quinol/quinone metabolism; 1,4-dihydroxy-2-naphthoate biosynthesis; 1,4-dihydroxy-2-naphthoate from chorismate: step 2/7.</text>
</comment>
<comment type="pathway">
    <text evidence="1">Cofactor biosynthesis; phylloquinone biosynthesis.</text>
</comment>
<comment type="subunit">
    <text evidence="1">Homodimer.</text>
</comment>
<comment type="similarity">
    <text evidence="1">Belongs to the TPP enzyme family. MenD subfamily.</text>
</comment>
<gene>
    <name evidence="1" type="primary">menD</name>
    <name type="ordered locus">syc0121_d</name>
</gene>
<dbReference type="EC" id="2.2.1.9" evidence="1"/>
<dbReference type="EMBL" id="AP008231">
    <property type="protein sequence ID" value="BAD78311.1"/>
    <property type="molecule type" value="Genomic_DNA"/>
</dbReference>
<dbReference type="RefSeq" id="WP_011242435.1">
    <property type="nucleotide sequence ID" value="NZ_CP085785.1"/>
</dbReference>
<dbReference type="SMR" id="Q5N5V7"/>
<dbReference type="GeneID" id="72430298"/>
<dbReference type="KEGG" id="syc:syc0121_d"/>
<dbReference type="eggNOG" id="COG1165">
    <property type="taxonomic scope" value="Bacteria"/>
</dbReference>
<dbReference type="UniPathway" id="UPA00995"/>
<dbReference type="UniPathway" id="UPA01057">
    <property type="reaction ID" value="UER00164"/>
</dbReference>
<dbReference type="Proteomes" id="UP000001175">
    <property type="component" value="Chromosome"/>
</dbReference>
<dbReference type="GO" id="GO:0070204">
    <property type="term" value="F:2-succinyl-5-enolpyruvyl-6-hydroxy-3-cyclohexene-1-carboxylic-acid synthase activity"/>
    <property type="evidence" value="ECO:0007669"/>
    <property type="project" value="UniProtKB-UniRule"/>
</dbReference>
<dbReference type="GO" id="GO:0000287">
    <property type="term" value="F:magnesium ion binding"/>
    <property type="evidence" value="ECO:0007669"/>
    <property type="project" value="UniProtKB-UniRule"/>
</dbReference>
<dbReference type="GO" id="GO:0030145">
    <property type="term" value="F:manganese ion binding"/>
    <property type="evidence" value="ECO:0007669"/>
    <property type="project" value="UniProtKB-UniRule"/>
</dbReference>
<dbReference type="GO" id="GO:0030976">
    <property type="term" value="F:thiamine pyrophosphate binding"/>
    <property type="evidence" value="ECO:0007669"/>
    <property type="project" value="UniProtKB-UniRule"/>
</dbReference>
<dbReference type="GO" id="GO:0009234">
    <property type="term" value="P:menaquinone biosynthetic process"/>
    <property type="evidence" value="ECO:0007669"/>
    <property type="project" value="InterPro"/>
</dbReference>
<dbReference type="GO" id="GO:0042372">
    <property type="term" value="P:phylloquinone biosynthetic process"/>
    <property type="evidence" value="ECO:0007669"/>
    <property type="project" value="UniProtKB-UniRule"/>
</dbReference>
<dbReference type="CDD" id="cd07037">
    <property type="entry name" value="TPP_PYR_MenD"/>
    <property type="match status" value="1"/>
</dbReference>
<dbReference type="CDD" id="cd02009">
    <property type="entry name" value="TPP_SHCHC_synthase"/>
    <property type="match status" value="1"/>
</dbReference>
<dbReference type="Gene3D" id="3.40.50.970">
    <property type="match status" value="2"/>
</dbReference>
<dbReference type="Gene3D" id="3.40.50.1220">
    <property type="entry name" value="TPP-binding domain"/>
    <property type="match status" value="1"/>
</dbReference>
<dbReference type="HAMAP" id="MF_01659">
    <property type="entry name" value="MenD"/>
    <property type="match status" value="1"/>
</dbReference>
<dbReference type="InterPro" id="IPR004433">
    <property type="entry name" value="MenaQ_synth_MenD"/>
</dbReference>
<dbReference type="InterPro" id="IPR032264">
    <property type="entry name" value="MenD_middle"/>
</dbReference>
<dbReference type="InterPro" id="IPR029061">
    <property type="entry name" value="THDP-binding"/>
</dbReference>
<dbReference type="InterPro" id="IPR012001">
    <property type="entry name" value="Thiamin_PyroP_enz_TPP-bd_dom"/>
</dbReference>
<dbReference type="InterPro" id="IPR011766">
    <property type="entry name" value="TPP_enzyme_TPP-bd"/>
</dbReference>
<dbReference type="NCBIfam" id="TIGR00173">
    <property type="entry name" value="menD"/>
    <property type="match status" value="1"/>
</dbReference>
<dbReference type="PANTHER" id="PTHR42916">
    <property type="entry name" value="2-SUCCINYL-5-ENOLPYRUVYL-6-HYDROXY-3-CYCLOHEXENE-1-CARBOXYLATE SYNTHASE"/>
    <property type="match status" value="1"/>
</dbReference>
<dbReference type="PANTHER" id="PTHR42916:SF1">
    <property type="entry name" value="PROTEIN PHYLLO, CHLOROPLASTIC"/>
    <property type="match status" value="1"/>
</dbReference>
<dbReference type="Pfam" id="PF02775">
    <property type="entry name" value="TPP_enzyme_C"/>
    <property type="match status" value="1"/>
</dbReference>
<dbReference type="Pfam" id="PF16582">
    <property type="entry name" value="TPP_enzyme_M_2"/>
    <property type="match status" value="1"/>
</dbReference>
<dbReference type="Pfam" id="PF02776">
    <property type="entry name" value="TPP_enzyme_N"/>
    <property type="match status" value="1"/>
</dbReference>
<dbReference type="PIRSF" id="PIRSF004983">
    <property type="entry name" value="MenD"/>
    <property type="match status" value="1"/>
</dbReference>
<dbReference type="SUPFAM" id="SSF52518">
    <property type="entry name" value="Thiamin diphosphate-binding fold (THDP-binding)"/>
    <property type="match status" value="2"/>
</dbReference>
<evidence type="ECO:0000255" key="1">
    <source>
        <dbReference type="HAMAP-Rule" id="MF_01659"/>
    </source>
</evidence>
<accession>Q5N5V7</accession>
<sequence length="582" mass="63330">MGQAAAITMPIDPRNLNTLWSSVLAESFVRLGLQTVVICPGSRSAPLAIAFAEHPEIDAIPILDERSAGFFALGRAKASHRPVALICSSGTAGANFYPAVIEAKESGVPLLVITADRPPELRQCHAGQAIDQLRLFGSYALWEAELALPVLDLGLLRYLRQTAQQAWQQALRGGPVHLNQPLREPLAPIADPATQTWLAQQWPGENFFAELLTAVPTPQIQQPLPPLPSQGLITVGPIAPEDPAAFVQAIAQLSAHLGWPVLSDAVTPLRQFADHCPRLISSYDLILRQPHWRASLQPEAVLQIGELPTSKELRLWLTEQTCPRWIVSPRPENFDPLHGSSHHLPVTVEAIAIPATIAPASDYSRQWQQAETAVQAAIAQHLAQVPDLTEPGIARLLSQHLPAQTPIFVANSTPIRDLEWFWLANDQRRSLYCSRGANGIDGTLSTAIGIAHQNRPSVLITGDLSLLHDSNGFLQRSQLQGHLTVVLIDNSGGGIFELLPIRDCGPSFEPFVATPQTVDFAALCQAYGVDYQAIATEAELIKAIQTLPTSGIRVLHLFTDRRQNAAWRRALFAELAAIPSQS</sequence>
<organism>
    <name type="scientific">Synechococcus sp. (strain ATCC 27144 / PCC 6301 / SAUG 1402/1)</name>
    <name type="common">Anacystis nidulans</name>
    <dbReference type="NCBI Taxonomy" id="269084"/>
    <lineage>
        <taxon>Bacteria</taxon>
        <taxon>Bacillati</taxon>
        <taxon>Cyanobacteriota</taxon>
        <taxon>Cyanophyceae</taxon>
        <taxon>Synechococcales</taxon>
        <taxon>Synechococcaceae</taxon>
        <taxon>Synechococcus</taxon>
    </lineage>
</organism>